<sequence>MAFSKDKTSRYSEHVDAYRAACGHHPDLKSFDSKIQQRTSNLIDSLTVEAKTGSVSPHAVHKEVIDIHLVEVSKAVADVITECGEEVWENGTLQSLVKDYFNSTMETLKIFETVTQCVHEAKRGQRYIKAAVAQFKKDSEEKDVGVKKKRYGKTLEELMKFKAMGNPFDDGLLKTQFELMNKQQESLFDRVTETKERIAKEIEEVQKRISNVNTATIVSHVVFGAAAFGYAAGCIALMCTGVGAPLGAGMVTLLPVIVVQWVGVNYVLNNSLEALQKQLKALNKVKPIPERITEGMEADKEGMKSVPEQVDELKDQISSLLQTVDDAIGSEGDEVDVKLDMESLEDDVKTLTTKITEVCETVAKYSKIIKEARLHVLEKITGTG</sequence>
<organism>
    <name type="scientific">Arabidopsis thaliana</name>
    <name type="common">Mouse-ear cress</name>
    <dbReference type="NCBI Taxonomy" id="3702"/>
    <lineage>
        <taxon>Eukaryota</taxon>
        <taxon>Viridiplantae</taxon>
        <taxon>Streptophyta</taxon>
        <taxon>Embryophyta</taxon>
        <taxon>Tracheophyta</taxon>
        <taxon>Spermatophyta</taxon>
        <taxon>Magnoliopsida</taxon>
        <taxon>eudicotyledons</taxon>
        <taxon>Gunneridae</taxon>
        <taxon>Pentapetalae</taxon>
        <taxon>rosids</taxon>
        <taxon>malvids</taxon>
        <taxon>Brassicales</taxon>
        <taxon>Brassicaceae</taxon>
        <taxon>Camelineae</taxon>
        <taxon>Arabidopsis</taxon>
    </lineage>
</organism>
<feature type="chain" id="PRO_0000306890" description="UPF0496 protein At3g28310/At3g28320">
    <location>
        <begin position="1"/>
        <end position="384"/>
    </location>
</feature>
<feature type="transmembrane region" description="Helical" evidence="1">
    <location>
        <begin position="217"/>
        <end position="237"/>
    </location>
</feature>
<feature type="transmembrane region" description="Helical" evidence="1">
    <location>
        <begin position="242"/>
        <end position="262"/>
    </location>
</feature>
<feature type="coiled-coil region" evidence="1">
    <location>
        <begin position="184"/>
        <end position="215"/>
    </location>
</feature>
<feature type="coiled-coil region" evidence="1">
    <location>
        <begin position="264"/>
        <end position="361"/>
    </location>
</feature>
<feature type="sequence conflict" description="In Ref. 3; AAT68382/AAT68381." evidence="2" ref="3">
    <original>C</original>
    <variation>G</variation>
    <location>
        <position position="359"/>
    </location>
</feature>
<name>U496E_ARATH</name>
<proteinExistence type="evidence at transcript level"/>
<protein>
    <recommendedName>
        <fullName>UPF0496 protein At3g28310/At3g28320</fullName>
    </recommendedName>
</protein>
<accession>Q6E240</accession>
<accession>A8MS39</accession>
<accession>F4IZ22</accession>
<accession>Q9LHD4</accession>
<accession>Q9LHD5</accession>
<keyword id="KW-0175">Coiled coil</keyword>
<keyword id="KW-0472">Membrane</keyword>
<keyword id="KW-1185">Reference proteome</keyword>
<keyword id="KW-0812">Transmembrane</keyword>
<keyword id="KW-1133">Transmembrane helix</keyword>
<dbReference type="EMBL" id="AP002051">
    <property type="protein sequence ID" value="BAB02623.1"/>
    <property type="status" value="ALT_SEQ"/>
    <property type="molecule type" value="Genomic_DNA"/>
</dbReference>
<dbReference type="EMBL" id="AP002051">
    <property type="protein sequence ID" value="BAB02624.1"/>
    <property type="status" value="ALT_SEQ"/>
    <property type="molecule type" value="Genomic_DNA"/>
</dbReference>
<dbReference type="EMBL" id="CP002686">
    <property type="protein sequence ID" value="AEE77431.1"/>
    <property type="status" value="ALT_SEQ"/>
    <property type="molecule type" value="Genomic_DNA"/>
</dbReference>
<dbReference type="EMBL" id="CP002686">
    <property type="protein sequence ID" value="AEE77432.2"/>
    <property type="status" value="ALT_SEQ"/>
    <property type="molecule type" value="Genomic_DNA"/>
</dbReference>
<dbReference type="EMBL" id="AY600582">
    <property type="protein sequence ID" value="AAT68381.1"/>
    <property type="molecule type" value="mRNA"/>
</dbReference>
<dbReference type="EMBL" id="AY600583">
    <property type="protein sequence ID" value="AAT68382.1"/>
    <property type="molecule type" value="mRNA"/>
</dbReference>
<dbReference type="EMBL" id="AY773881">
    <property type="protein sequence ID" value="AAV63910.1"/>
    <property type="molecule type" value="mRNA"/>
</dbReference>
<dbReference type="RefSeq" id="NP_189471.1">
    <property type="nucleotide sequence ID" value="NM_113750.1"/>
</dbReference>
<dbReference type="RefSeq" id="NP_189472.2">
    <property type="nucleotide sequence ID" value="NM_113751.3"/>
</dbReference>
<dbReference type="SMR" id="Q6E240"/>
<dbReference type="STRING" id="3702.Q6E240"/>
<dbReference type="PaxDb" id="3702-AT3G28320.1"/>
<dbReference type="KEGG" id="ath:AT3G28310"/>
<dbReference type="KEGG" id="ath:AT3G28320"/>
<dbReference type="Araport" id="AT3G28310"/>
<dbReference type="Araport" id="AT3G28320"/>
<dbReference type="TAIR" id="AT3G28310"/>
<dbReference type="HOGENOM" id="CLU_044778_1_0_1"/>
<dbReference type="InParanoid" id="Q6E240"/>
<dbReference type="PhylomeDB" id="Q6E240"/>
<dbReference type="PRO" id="PR:Q6E240"/>
<dbReference type="Proteomes" id="UP000006548">
    <property type="component" value="Chromosome 3"/>
</dbReference>
<dbReference type="ExpressionAtlas" id="Q6E240">
    <property type="expression patterns" value="baseline and differential"/>
</dbReference>
<dbReference type="GO" id="GO:0016020">
    <property type="term" value="C:membrane"/>
    <property type="evidence" value="ECO:0007669"/>
    <property type="project" value="UniProtKB-SubCell"/>
</dbReference>
<dbReference type="Gene3D" id="1.20.1170.10">
    <property type="match status" value="1"/>
</dbReference>
<dbReference type="InterPro" id="IPR007749">
    <property type="entry name" value="DUF677"/>
</dbReference>
<dbReference type="PANTHER" id="PTHR31113:SF13">
    <property type="entry name" value="(RAPE) HYPOTHETICAL PROTEIN"/>
    <property type="match status" value="1"/>
</dbReference>
<dbReference type="PANTHER" id="PTHR31113">
    <property type="entry name" value="UPF0496 PROTEIN 3-RELATED"/>
    <property type="match status" value="1"/>
</dbReference>
<dbReference type="Pfam" id="PF05055">
    <property type="entry name" value="DUF677"/>
    <property type="match status" value="1"/>
</dbReference>
<comment type="subcellular location">
    <subcellularLocation>
        <location evidence="2">Membrane</location>
        <topology evidence="2">Multi-pass membrane protein</topology>
    </subcellularLocation>
</comment>
<comment type="similarity">
    <text evidence="2">Belongs to the UPF0496 family.</text>
</comment>
<comment type="sequence caution" evidence="2">
    <conflict type="erroneous gene model prediction">
        <sequence resource="EMBL-CDS" id="AEE77431"/>
    </conflict>
    <text>Was originally thought to correspond to two different genes At3g28310 and At3g28320.</text>
</comment>
<comment type="sequence caution" evidence="2">
    <conflict type="erroneous gene model prediction">
        <sequence resource="EMBL-CDS" id="AEE77432"/>
    </conflict>
    <text>Was originally thought to correspond to two different genes At3g28310 and At3g28320.</text>
</comment>
<comment type="sequence caution" evidence="2">
    <conflict type="erroneous gene model prediction">
        <sequence resource="EMBL-CDS" id="BAB02623"/>
    </conflict>
    <text>Was originally thought to correspond to two different genes At3g28310 and At3g28320.</text>
</comment>
<comment type="sequence caution" evidence="2">
    <conflict type="erroneous gene model prediction">
        <sequence resource="EMBL-CDS" id="BAB02624"/>
    </conflict>
    <text>Was originally thought to correspond to two different genes At3g28310 and At3g28320.</text>
</comment>
<gene>
    <name type="ordered locus">At3g28310/At3g28320</name>
    <name type="ORF">MZF16.11/MZF16.13</name>
</gene>
<reference key="1">
    <citation type="journal article" date="2000" name="DNA Res.">
        <title>Structural analysis of Arabidopsis thaliana chromosome 3. II. Sequence features of the 4,251,695 bp regions covered by 90 P1, TAC and BAC clones.</title>
        <authorList>
            <person name="Kaneko T."/>
            <person name="Katoh T."/>
            <person name="Sato S."/>
            <person name="Nakamura Y."/>
            <person name="Asamizu E."/>
            <person name="Tabata S."/>
        </authorList>
    </citation>
    <scope>NUCLEOTIDE SEQUENCE [LARGE SCALE GENOMIC DNA]</scope>
    <source>
        <strain>cv. Columbia</strain>
    </source>
</reference>
<reference key="2">
    <citation type="journal article" date="2017" name="Plant J.">
        <title>Araport11: a complete reannotation of the Arabidopsis thaliana reference genome.</title>
        <authorList>
            <person name="Cheng C.Y."/>
            <person name="Krishnakumar V."/>
            <person name="Chan A.P."/>
            <person name="Thibaud-Nissen F."/>
            <person name="Schobel S."/>
            <person name="Town C.D."/>
        </authorList>
    </citation>
    <scope>GENOME REANNOTATION</scope>
    <source>
        <strain>cv. Columbia</strain>
    </source>
</reference>
<reference key="3">
    <citation type="submission" date="2004-04" db="EMBL/GenBank/DDBJ databases">
        <title>Reconstruction of cDNA sequences for hypothetical genes in Arabidopsis thaliana from 5' and 3' RACE products.</title>
        <authorList>
            <person name="Xiao Y.-L."/>
            <person name="Underwood B.A."/>
            <person name="Moskal W.A. Jr."/>
            <person name="Torian U."/>
            <person name="Redman J.C."/>
            <person name="Wu H.C."/>
            <person name="Utterback T."/>
            <person name="Town C.D."/>
        </authorList>
    </citation>
    <scope>NUCLEOTIDE SEQUENCE [LARGE SCALE MRNA] OF 105-384</scope>
    <source>
        <strain>cv. Columbia</strain>
    </source>
</reference>
<reference key="4">
    <citation type="submission" date="2004-10" db="EMBL/GenBank/DDBJ databases">
        <authorList>
            <person name="Underwood B.A."/>
            <person name="Xiao Y.-L."/>
            <person name="Moskal W.A. Jr."/>
            <person name="Monaghan E.L."/>
            <person name="Wang W."/>
            <person name="Redman J.C."/>
            <person name="Wu H.C."/>
            <person name="Utterback T."/>
            <person name="Town C.D."/>
        </authorList>
    </citation>
    <scope>NUCLEOTIDE SEQUENCE [LARGE SCALE MRNA] OF 105-384</scope>
    <source>
        <strain>cv. Columbia</strain>
    </source>
</reference>
<evidence type="ECO:0000255" key="1"/>
<evidence type="ECO:0000305" key="2"/>